<proteinExistence type="inferred from homology"/>
<accession>A5WDV0</accession>
<keyword id="KW-0687">Ribonucleoprotein</keyword>
<keyword id="KW-0689">Ribosomal protein</keyword>
<keyword id="KW-0694">RNA-binding</keyword>
<keyword id="KW-0699">rRNA-binding</keyword>
<sequence>MYAVIKSGGKQHRVNVDELLKVELLKAEKGETIKIEDVLMVVDGDDYKIGQPVVEGASVEAEVVEHGRGKKIRIVKHKRRKHYHKEQGHRQWYTLLKIKAINV</sequence>
<dbReference type="EMBL" id="CP000713">
    <property type="protein sequence ID" value="ABQ93841.1"/>
    <property type="molecule type" value="Genomic_DNA"/>
</dbReference>
<dbReference type="SMR" id="A5WDV0"/>
<dbReference type="STRING" id="349106.PsycPRwf_0891"/>
<dbReference type="KEGG" id="prw:PsycPRwf_0891"/>
<dbReference type="eggNOG" id="COG0261">
    <property type="taxonomic scope" value="Bacteria"/>
</dbReference>
<dbReference type="HOGENOM" id="CLU_061463_3_2_6"/>
<dbReference type="GO" id="GO:0005737">
    <property type="term" value="C:cytoplasm"/>
    <property type="evidence" value="ECO:0007669"/>
    <property type="project" value="UniProtKB-ARBA"/>
</dbReference>
<dbReference type="GO" id="GO:1990904">
    <property type="term" value="C:ribonucleoprotein complex"/>
    <property type="evidence" value="ECO:0007669"/>
    <property type="project" value="UniProtKB-KW"/>
</dbReference>
<dbReference type="GO" id="GO:0005840">
    <property type="term" value="C:ribosome"/>
    <property type="evidence" value="ECO:0007669"/>
    <property type="project" value="UniProtKB-KW"/>
</dbReference>
<dbReference type="GO" id="GO:0019843">
    <property type="term" value="F:rRNA binding"/>
    <property type="evidence" value="ECO:0007669"/>
    <property type="project" value="UniProtKB-UniRule"/>
</dbReference>
<dbReference type="GO" id="GO:0003735">
    <property type="term" value="F:structural constituent of ribosome"/>
    <property type="evidence" value="ECO:0007669"/>
    <property type="project" value="InterPro"/>
</dbReference>
<dbReference type="GO" id="GO:0006412">
    <property type="term" value="P:translation"/>
    <property type="evidence" value="ECO:0007669"/>
    <property type="project" value="UniProtKB-UniRule"/>
</dbReference>
<dbReference type="HAMAP" id="MF_01363">
    <property type="entry name" value="Ribosomal_bL21"/>
    <property type="match status" value="1"/>
</dbReference>
<dbReference type="InterPro" id="IPR028909">
    <property type="entry name" value="bL21-like"/>
</dbReference>
<dbReference type="InterPro" id="IPR036164">
    <property type="entry name" value="bL21-like_sf"/>
</dbReference>
<dbReference type="InterPro" id="IPR001787">
    <property type="entry name" value="Ribosomal_bL21"/>
</dbReference>
<dbReference type="InterPro" id="IPR018258">
    <property type="entry name" value="Ribosomal_bL21_CS"/>
</dbReference>
<dbReference type="NCBIfam" id="TIGR00061">
    <property type="entry name" value="L21"/>
    <property type="match status" value="1"/>
</dbReference>
<dbReference type="PANTHER" id="PTHR21349">
    <property type="entry name" value="50S RIBOSOMAL PROTEIN L21"/>
    <property type="match status" value="1"/>
</dbReference>
<dbReference type="PANTHER" id="PTHR21349:SF0">
    <property type="entry name" value="LARGE RIBOSOMAL SUBUNIT PROTEIN BL21M"/>
    <property type="match status" value="1"/>
</dbReference>
<dbReference type="Pfam" id="PF00829">
    <property type="entry name" value="Ribosomal_L21p"/>
    <property type="match status" value="1"/>
</dbReference>
<dbReference type="SUPFAM" id="SSF141091">
    <property type="entry name" value="L21p-like"/>
    <property type="match status" value="1"/>
</dbReference>
<dbReference type="PROSITE" id="PS01169">
    <property type="entry name" value="RIBOSOMAL_L21"/>
    <property type="match status" value="1"/>
</dbReference>
<gene>
    <name evidence="1" type="primary">rplU</name>
    <name type="ordered locus">PsycPRwf_0891</name>
</gene>
<feature type="chain" id="PRO_1000073389" description="Large ribosomal subunit protein bL21">
    <location>
        <begin position="1"/>
        <end position="103"/>
    </location>
</feature>
<name>RL21_PSYWF</name>
<reference key="1">
    <citation type="submission" date="2007-05" db="EMBL/GenBank/DDBJ databases">
        <title>Complete sequence of chromosome of Psychrobacter sp. PRwf-1.</title>
        <authorList>
            <consortium name="US DOE Joint Genome Institute"/>
            <person name="Copeland A."/>
            <person name="Lucas S."/>
            <person name="Lapidus A."/>
            <person name="Barry K."/>
            <person name="Detter J.C."/>
            <person name="Glavina del Rio T."/>
            <person name="Hammon N."/>
            <person name="Israni S."/>
            <person name="Dalin E."/>
            <person name="Tice H."/>
            <person name="Pitluck S."/>
            <person name="Chain P."/>
            <person name="Malfatti S."/>
            <person name="Shin M."/>
            <person name="Vergez L."/>
            <person name="Schmutz J."/>
            <person name="Larimer F."/>
            <person name="Land M."/>
            <person name="Hauser L."/>
            <person name="Kyrpides N."/>
            <person name="Kim E."/>
            <person name="Tiedje J."/>
            <person name="Richardson P."/>
        </authorList>
    </citation>
    <scope>NUCLEOTIDE SEQUENCE [LARGE SCALE GENOMIC DNA]</scope>
    <source>
        <strain>PRwf-1</strain>
    </source>
</reference>
<organism>
    <name type="scientific">Psychrobacter sp. (strain PRwf-1)</name>
    <dbReference type="NCBI Taxonomy" id="349106"/>
    <lineage>
        <taxon>Bacteria</taxon>
        <taxon>Pseudomonadati</taxon>
        <taxon>Pseudomonadota</taxon>
        <taxon>Gammaproteobacteria</taxon>
        <taxon>Moraxellales</taxon>
        <taxon>Moraxellaceae</taxon>
        <taxon>Psychrobacter</taxon>
    </lineage>
</organism>
<comment type="function">
    <text evidence="1">This protein binds to 23S rRNA in the presence of protein L20.</text>
</comment>
<comment type="subunit">
    <text evidence="1">Part of the 50S ribosomal subunit. Contacts protein L20.</text>
</comment>
<comment type="similarity">
    <text evidence="1">Belongs to the bacterial ribosomal protein bL21 family.</text>
</comment>
<evidence type="ECO:0000255" key="1">
    <source>
        <dbReference type="HAMAP-Rule" id="MF_01363"/>
    </source>
</evidence>
<evidence type="ECO:0000305" key="2"/>
<protein>
    <recommendedName>
        <fullName evidence="1">Large ribosomal subunit protein bL21</fullName>
    </recommendedName>
    <alternativeName>
        <fullName evidence="2">50S ribosomal protein L21</fullName>
    </alternativeName>
</protein>